<proteinExistence type="inferred from homology"/>
<protein>
    <recommendedName>
        <fullName evidence="1">3-deoxy-manno-octulosonate cytidylyltransferase</fullName>
        <ecNumber evidence="1">2.7.7.38</ecNumber>
    </recommendedName>
    <alternativeName>
        <fullName evidence="1">CMP-2-keto-3-deoxyoctulosonic acid synthase</fullName>
        <shortName evidence="1">CKS</shortName>
        <shortName evidence="1">CMP-KDO synthase</shortName>
    </alternativeName>
</protein>
<keyword id="KW-0963">Cytoplasm</keyword>
<keyword id="KW-0448">Lipopolysaccharide biosynthesis</keyword>
<keyword id="KW-0548">Nucleotidyltransferase</keyword>
<keyword id="KW-1185">Reference proteome</keyword>
<keyword id="KW-0808">Transferase</keyword>
<dbReference type="EC" id="2.7.7.38" evidence="1"/>
<dbReference type="EMBL" id="AE017143">
    <property type="protein sequence ID" value="AAP95311.1"/>
    <property type="molecule type" value="Genomic_DNA"/>
</dbReference>
<dbReference type="RefSeq" id="WP_010944364.1">
    <property type="nucleotide sequence ID" value="NC_002940.2"/>
</dbReference>
<dbReference type="SMR" id="Q7VNY6"/>
<dbReference type="STRING" id="233412.HD_0334"/>
<dbReference type="KEGG" id="hdu:HD_0334"/>
<dbReference type="eggNOG" id="COG1212">
    <property type="taxonomic scope" value="Bacteria"/>
</dbReference>
<dbReference type="HOGENOM" id="CLU_065038_1_0_6"/>
<dbReference type="OrthoDB" id="9815559at2"/>
<dbReference type="UniPathway" id="UPA00030"/>
<dbReference type="UniPathway" id="UPA00358">
    <property type="reaction ID" value="UER00476"/>
</dbReference>
<dbReference type="Proteomes" id="UP000001022">
    <property type="component" value="Chromosome"/>
</dbReference>
<dbReference type="GO" id="GO:0005829">
    <property type="term" value="C:cytosol"/>
    <property type="evidence" value="ECO:0007669"/>
    <property type="project" value="TreeGrafter"/>
</dbReference>
<dbReference type="GO" id="GO:0008690">
    <property type="term" value="F:3-deoxy-manno-octulosonate cytidylyltransferase activity"/>
    <property type="evidence" value="ECO:0007669"/>
    <property type="project" value="UniProtKB-UniRule"/>
</dbReference>
<dbReference type="GO" id="GO:0033468">
    <property type="term" value="P:CMP-keto-3-deoxy-D-manno-octulosonic acid biosynthetic process"/>
    <property type="evidence" value="ECO:0007669"/>
    <property type="project" value="UniProtKB-UniRule"/>
</dbReference>
<dbReference type="GO" id="GO:0009103">
    <property type="term" value="P:lipopolysaccharide biosynthetic process"/>
    <property type="evidence" value="ECO:0007669"/>
    <property type="project" value="UniProtKB-UniRule"/>
</dbReference>
<dbReference type="CDD" id="cd02517">
    <property type="entry name" value="CMP-KDO-Synthetase"/>
    <property type="match status" value="1"/>
</dbReference>
<dbReference type="FunFam" id="3.90.550.10:FF:000011">
    <property type="entry name" value="3-deoxy-manno-octulosonate cytidylyltransferase"/>
    <property type="match status" value="1"/>
</dbReference>
<dbReference type="Gene3D" id="3.90.550.10">
    <property type="entry name" value="Spore Coat Polysaccharide Biosynthesis Protein SpsA, Chain A"/>
    <property type="match status" value="1"/>
</dbReference>
<dbReference type="HAMAP" id="MF_00057">
    <property type="entry name" value="KdsB"/>
    <property type="match status" value="1"/>
</dbReference>
<dbReference type="InterPro" id="IPR003329">
    <property type="entry name" value="Cytidylyl_trans"/>
</dbReference>
<dbReference type="InterPro" id="IPR004528">
    <property type="entry name" value="KdsB"/>
</dbReference>
<dbReference type="InterPro" id="IPR029044">
    <property type="entry name" value="Nucleotide-diphossugar_trans"/>
</dbReference>
<dbReference type="NCBIfam" id="TIGR00466">
    <property type="entry name" value="kdsB"/>
    <property type="match status" value="1"/>
</dbReference>
<dbReference type="NCBIfam" id="NF003950">
    <property type="entry name" value="PRK05450.1-3"/>
    <property type="match status" value="1"/>
</dbReference>
<dbReference type="NCBIfam" id="NF003952">
    <property type="entry name" value="PRK05450.1-5"/>
    <property type="match status" value="1"/>
</dbReference>
<dbReference type="NCBIfam" id="NF009905">
    <property type="entry name" value="PRK13368.1"/>
    <property type="match status" value="1"/>
</dbReference>
<dbReference type="PANTHER" id="PTHR42866">
    <property type="entry name" value="3-DEOXY-MANNO-OCTULOSONATE CYTIDYLYLTRANSFERASE"/>
    <property type="match status" value="1"/>
</dbReference>
<dbReference type="PANTHER" id="PTHR42866:SF2">
    <property type="entry name" value="3-DEOXY-MANNO-OCTULOSONATE CYTIDYLYLTRANSFERASE, MITOCHONDRIAL"/>
    <property type="match status" value="1"/>
</dbReference>
<dbReference type="Pfam" id="PF02348">
    <property type="entry name" value="CTP_transf_3"/>
    <property type="match status" value="1"/>
</dbReference>
<dbReference type="SUPFAM" id="SSF53448">
    <property type="entry name" value="Nucleotide-diphospho-sugar transferases"/>
    <property type="match status" value="1"/>
</dbReference>
<reference key="1">
    <citation type="submission" date="2003-06" db="EMBL/GenBank/DDBJ databases">
        <title>The complete genome sequence of Haemophilus ducreyi.</title>
        <authorList>
            <person name="Munson R.S. Jr."/>
            <person name="Ray W.C."/>
            <person name="Mahairas G."/>
            <person name="Sabo P."/>
            <person name="Mungur R."/>
            <person name="Johnson L."/>
            <person name="Nguyen D."/>
            <person name="Wang J."/>
            <person name="Forst C."/>
            <person name="Hood L."/>
        </authorList>
    </citation>
    <scope>NUCLEOTIDE SEQUENCE [LARGE SCALE GENOMIC DNA]</scope>
    <source>
        <strain>35000HP / ATCC 700724</strain>
    </source>
</reference>
<comment type="function">
    <text evidence="1">Activates KDO (a required 8-carbon sugar) for incorporation into bacterial lipopolysaccharide in Gram-negative bacteria.</text>
</comment>
<comment type="catalytic activity">
    <reaction evidence="1">
        <text>3-deoxy-alpha-D-manno-oct-2-ulosonate + CTP = CMP-3-deoxy-beta-D-manno-octulosonate + diphosphate</text>
        <dbReference type="Rhea" id="RHEA:23448"/>
        <dbReference type="ChEBI" id="CHEBI:33019"/>
        <dbReference type="ChEBI" id="CHEBI:37563"/>
        <dbReference type="ChEBI" id="CHEBI:85986"/>
        <dbReference type="ChEBI" id="CHEBI:85987"/>
        <dbReference type="EC" id="2.7.7.38"/>
    </reaction>
</comment>
<comment type="pathway">
    <text evidence="1">Nucleotide-sugar biosynthesis; CMP-3-deoxy-D-manno-octulosonate biosynthesis; CMP-3-deoxy-D-manno-octulosonate from 3-deoxy-D-manno-octulosonate and CTP: step 1/1.</text>
</comment>
<comment type="pathway">
    <text evidence="1">Bacterial outer membrane biogenesis; lipopolysaccharide biosynthesis.</text>
</comment>
<comment type="subcellular location">
    <subcellularLocation>
        <location evidence="1">Cytoplasm</location>
    </subcellularLocation>
</comment>
<comment type="similarity">
    <text evidence="1">Belongs to the KdsB family.</text>
</comment>
<organism>
    <name type="scientific">Haemophilus ducreyi (strain 35000HP / ATCC 700724)</name>
    <dbReference type="NCBI Taxonomy" id="233412"/>
    <lineage>
        <taxon>Bacteria</taxon>
        <taxon>Pseudomonadati</taxon>
        <taxon>Pseudomonadota</taxon>
        <taxon>Gammaproteobacteria</taxon>
        <taxon>Pasteurellales</taxon>
        <taxon>Pasteurellaceae</taxon>
        <taxon>Haemophilus</taxon>
    </lineage>
</organism>
<feature type="chain" id="PRO_0000188505" description="3-deoxy-manno-octulosonate cytidylyltransferase">
    <location>
        <begin position="1"/>
        <end position="253"/>
    </location>
</feature>
<gene>
    <name evidence="1" type="primary">kdsB</name>
    <name type="ordered locus">HD_0334</name>
</gene>
<name>KDSB_HAEDU</name>
<sequence>MKFTVIIPARYASSRLPGKPLLDINGYPMIQYVWQKAQQAGANRVIIATDHPQIQTVAKAFGAEVCMTSDQHQSGTERLAEVVAKMAIADQEIIVNVQGDEPLIPPIIVQQVATNLDKNGVNMATLAVKLTTREELFNPNVVKTVINDKGMALYFSRAAVPFARDHFSECDDTFVASQCYLRHIGIYAYRAGFIKQYVAWQPTVLEQLESLEQLRALWYGEQIHVELAKQAPALGVDTAQDLARVRQMLSQTV</sequence>
<accession>Q7VNY6</accession>
<evidence type="ECO:0000255" key="1">
    <source>
        <dbReference type="HAMAP-Rule" id="MF_00057"/>
    </source>
</evidence>